<sequence length="338" mass="38408">MANRANRHAARTEDSDNTINYVQCDGLAVMKMVKHCHEESSNMDLAQGALLGLVVDKCLEITNCFPFPKSGDETMDEEMYQLTVMRRLRRVNVDHLHVGWYQSSDVGNSLSMALLESQYHYQTSIEESVVVVYDTQKSSRGFLCLKAYRLTPQAIQMYKDGDFTPEAFRTLKVGYENLFAEIPIVIKNSPLTNIMMSELNELLPEDKGHNFLDLGTATVLENQMRSLIERVDELYQEAVRYNKYQQVVFKQDTEKHRALAKLAAENAVRTSKGEPTVPEEEVIKQFRPMTAPNRLTATITSGQINTHAQHIAQFCSQSLAKLFITESLQIAKEAKETK</sequence>
<keyword id="KW-0963">Cytoplasm</keyword>
<keyword id="KW-0396">Initiation factor</keyword>
<keyword id="KW-0648">Protein biosynthesis</keyword>
<keyword id="KW-1185">Reference proteome</keyword>
<protein>
    <recommendedName>
        <fullName evidence="1">Eukaryotic translation initiation factor 3 subunit H</fullName>
        <shortName evidence="1">eIF3h</shortName>
    </recommendedName>
    <alternativeName>
        <fullName evidence="1">Eukaryotic translation initiation factor 3 subunit 3</fullName>
    </alternativeName>
</protein>
<name>EIF3H_DROME</name>
<proteinExistence type="evidence at protein level"/>
<evidence type="ECO:0000255" key="1">
    <source>
        <dbReference type="HAMAP-Rule" id="MF_03007"/>
    </source>
</evidence>
<evidence type="ECO:0000255" key="2">
    <source>
        <dbReference type="PROSITE-ProRule" id="PRU01182"/>
    </source>
</evidence>
<evidence type="ECO:0000269" key="3">
    <source>
    </source>
</evidence>
<reference key="1">
    <citation type="journal article" date="2000" name="Science">
        <title>The genome sequence of Drosophila melanogaster.</title>
        <authorList>
            <person name="Adams M.D."/>
            <person name="Celniker S.E."/>
            <person name="Holt R.A."/>
            <person name="Evans C.A."/>
            <person name="Gocayne J.D."/>
            <person name="Amanatides P.G."/>
            <person name="Scherer S.E."/>
            <person name="Li P.W."/>
            <person name="Hoskins R.A."/>
            <person name="Galle R.F."/>
            <person name="George R.A."/>
            <person name="Lewis S.E."/>
            <person name="Richards S."/>
            <person name="Ashburner M."/>
            <person name="Henderson S.N."/>
            <person name="Sutton G.G."/>
            <person name="Wortman J.R."/>
            <person name="Yandell M.D."/>
            <person name="Zhang Q."/>
            <person name="Chen L.X."/>
            <person name="Brandon R.C."/>
            <person name="Rogers Y.-H.C."/>
            <person name="Blazej R.G."/>
            <person name="Champe M."/>
            <person name="Pfeiffer B.D."/>
            <person name="Wan K.H."/>
            <person name="Doyle C."/>
            <person name="Baxter E.G."/>
            <person name="Helt G."/>
            <person name="Nelson C.R."/>
            <person name="Miklos G.L.G."/>
            <person name="Abril J.F."/>
            <person name="Agbayani A."/>
            <person name="An H.-J."/>
            <person name="Andrews-Pfannkoch C."/>
            <person name="Baldwin D."/>
            <person name="Ballew R.M."/>
            <person name="Basu A."/>
            <person name="Baxendale J."/>
            <person name="Bayraktaroglu L."/>
            <person name="Beasley E.M."/>
            <person name="Beeson K.Y."/>
            <person name="Benos P.V."/>
            <person name="Berman B.P."/>
            <person name="Bhandari D."/>
            <person name="Bolshakov S."/>
            <person name="Borkova D."/>
            <person name="Botchan M.R."/>
            <person name="Bouck J."/>
            <person name="Brokstein P."/>
            <person name="Brottier P."/>
            <person name="Burtis K.C."/>
            <person name="Busam D.A."/>
            <person name="Butler H."/>
            <person name="Cadieu E."/>
            <person name="Center A."/>
            <person name="Chandra I."/>
            <person name="Cherry J.M."/>
            <person name="Cawley S."/>
            <person name="Dahlke C."/>
            <person name="Davenport L.B."/>
            <person name="Davies P."/>
            <person name="de Pablos B."/>
            <person name="Delcher A."/>
            <person name="Deng Z."/>
            <person name="Mays A.D."/>
            <person name="Dew I."/>
            <person name="Dietz S.M."/>
            <person name="Dodson K."/>
            <person name="Doup L.E."/>
            <person name="Downes M."/>
            <person name="Dugan-Rocha S."/>
            <person name="Dunkov B.C."/>
            <person name="Dunn P."/>
            <person name="Durbin K.J."/>
            <person name="Evangelista C.C."/>
            <person name="Ferraz C."/>
            <person name="Ferriera S."/>
            <person name="Fleischmann W."/>
            <person name="Fosler C."/>
            <person name="Gabrielian A.E."/>
            <person name="Garg N.S."/>
            <person name="Gelbart W.M."/>
            <person name="Glasser K."/>
            <person name="Glodek A."/>
            <person name="Gong F."/>
            <person name="Gorrell J.H."/>
            <person name="Gu Z."/>
            <person name="Guan P."/>
            <person name="Harris M."/>
            <person name="Harris N.L."/>
            <person name="Harvey D.A."/>
            <person name="Heiman T.J."/>
            <person name="Hernandez J.R."/>
            <person name="Houck J."/>
            <person name="Hostin D."/>
            <person name="Houston K.A."/>
            <person name="Howland T.J."/>
            <person name="Wei M.-H."/>
            <person name="Ibegwam C."/>
            <person name="Jalali M."/>
            <person name="Kalush F."/>
            <person name="Karpen G.H."/>
            <person name="Ke Z."/>
            <person name="Kennison J.A."/>
            <person name="Ketchum K.A."/>
            <person name="Kimmel B.E."/>
            <person name="Kodira C.D."/>
            <person name="Kraft C.L."/>
            <person name="Kravitz S."/>
            <person name="Kulp D."/>
            <person name="Lai Z."/>
            <person name="Lasko P."/>
            <person name="Lei Y."/>
            <person name="Levitsky A.A."/>
            <person name="Li J.H."/>
            <person name="Li Z."/>
            <person name="Liang Y."/>
            <person name="Lin X."/>
            <person name="Liu X."/>
            <person name="Mattei B."/>
            <person name="McIntosh T.C."/>
            <person name="McLeod M.P."/>
            <person name="McPherson D."/>
            <person name="Merkulov G."/>
            <person name="Milshina N.V."/>
            <person name="Mobarry C."/>
            <person name="Morris J."/>
            <person name="Moshrefi A."/>
            <person name="Mount S.M."/>
            <person name="Moy M."/>
            <person name="Murphy B."/>
            <person name="Murphy L."/>
            <person name="Muzny D.M."/>
            <person name="Nelson D.L."/>
            <person name="Nelson D.R."/>
            <person name="Nelson K.A."/>
            <person name="Nixon K."/>
            <person name="Nusskern D.R."/>
            <person name="Pacleb J.M."/>
            <person name="Palazzolo M."/>
            <person name="Pittman G.S."/>
            <person name="Pan S."/>
            <person name="Pollard J."/>
            <person name="Puri V."/>
            <person name="Reese M.G."/>
            <person name="Reinert K."/>
            <person name="Remington K."/>
            <person name="Saunders R.D.C."/>
            <person name="Scheeler F."/>
            <person name="Shen H."/>
            <person name="Shue B.C."/>
            <person name="Siden-Kiamos I."/>
            <person name="Simpson M."/>
            <person name="Skupski M.P."/>
            <person name="Smith T.J."/>
            <person name="Spier E."/>
            <person name="Spradling A.C."/>
            <person name="Stapleton M."/>
            <person name="Strong R."/>
            <person name="Sun E."/>
            <person name="Svirskas R."/>
            <person name="Tector C."/>
            <person name="Turner R."/>
            <person name="Venter E."/>
            <person name="Wang A.H."/>
            <person name="Wang X."/>
            <person name="Wang Z.-Y."/>
            <person name="Wassarman D.A."/>
            <person name="Weinstock G.M."/>
            <person name="Weissenbach J."/>
            <person name="Williams S.M."/>
            <person name="Woodage T."/>
            <person name="Worley K.C."/>
            <person name="Wu D."/>
            <person name="Yang S."/>
            <person name="Yao Q.A."/>
            <person name="Ye J."/>
            <person name="Yeh R.-F."/>
            <person name="Zaveri J.S."/>
            <person name="Zhan M."/>
            <person name="Zhang G."/>
            <person name="Zhao Q."/>
            <person name="Zheng L."/>
            <person name="Zheng X.H."/>
            <person name="Zhong F.N."/>
            <person name="Zhong W."/>
            <person name="Zhou X."/>
            <person name="Zhu S.C."/>
            <person name="Zhu X."/>
            <person name="Smith H.O."/>
            <person name="Gibbs R.A."/>
            <person name="Myers E.W."/>
            <person name="Rubin G.M."/>
            <person name="Venter J.C."/>
        </authorList>
    </citation>
    <scope>NUCLEOTIDE SEQUENCE [LARGE SCALE GENOMIC DNA]</scope>
    <source>
        <strain>Berkeley</strain>
    </source>
</reference>
<reference key="2">
    <citation type="journal article" date="2002" name="Genome Biol.">
        <title>Annotation of the Drosophila melanogaster euchromatic genome: a systematic review.</title>
        <authorList>
            <person name="Misra S."/>
            <person name="Crosby M.A."/>
            <person name="Mungall C.J."/>
            <person name="Matthews B.B."/>
            <person name="Campbell K.S."/>
            <person name="Hradecky P."/>
            <person name="Huang Y."/>
            <person name="Kaminker J.S."/>
            <person name="Millburn G.H."/>
            <person name="Prochnik S.E."/>
            <person name="Smith C.D."/>
            <person name="Tupy J.L."/>
            <person name="Whitfield E.J."/>
            <person name="Bayraktaroglu L."/>
            <person name="Berman B.P."/>
            <person name="Bettencourt B.R."/>
            <person name="Celniker S.E."/>
            <person name="de Grey A.D.N.J."/>
            <person name="Drysdale R.A."/>
            <person name="Harris N.L."/>
            <person name="Richter J."/>
            <person name="Russo S."/>
            <person name="Schroeder A.J."/>
            <person name="Shu S.Q."/>
            <person name="Stapleton M."/>
            <person name="Yamada C."/>
            <person name="Ashburner M."/>
            <person name="Gelbart W.M."/>
            <person name="Rubin G.M."/>
            <person name="Lewis S.E."/>
        </authorList>
    </citation>
    <scope>GENOME REANNOTATION</scope>
    <source>
        <strain>Berkeley</strain>
    </source>
</reference>
<reference key="3">
    <citation type="submission" date="2009-03" db="EMBL/GenBank/DDBJ databases">
        <authorList>
            <person name="Stapleton M."/>
            <person name="Brokstein P."/>
            <person name="Hong L."/>
            <person name="Agbayani A."/>
            <person name="Carlson J.W."/>
            <person name="Booth B."/>
            <person name="Champe M."/>
            <person name="Chavez C."/>
            <person name="Dorsett V."/>
            <person name="Dresnek D."/>
            <person name="Farfan D."/>
            <person name="Frise E."/>
            <person name="George R.A."/>
            <person name="Gonzalez M."/>
            <person name="Guarin H."/>
            <person name="Kronmiller B."/>
            <person name="Li P.W."/>
            <person name="Liao G."/>
            <person name="Miranda A."/>
            <person name="Mungall C.J."/>
            <person name="Nunoo J."/>
            <person name="Pacleb J.M."/>
            <person name="Paragas V."/>
            <person name="Park S."/>
            <person name="Patel S."/>
            <person name="Phouanenavong S."/>
            <person name="Wan K.H."/>
            <person name="Yu C."/>
            <person name="Lewis S.E."/>
            <person name="Rubin G.M."/>
            <person name="Celniker S.E."/>
        </authorList>
    </citation>
    <scope>NUCLEOTIDE SEQUENCE [LARGE SCALE MRNA]</scope>
    <source>
        <strain>Berkeley</strain>
        <tissue>Embryo</tissue>
        <tissue>Ovary</tissue>
    </source>
</reference>
<reference key="4">
    <citation type="journal article" date="2013" name="Mol. Cell. Biol.">
        <title>Mextli is a novel eukaryotic translation initiation factor 4E-binding protein that promotes translation in Drosophila melanogaster.</title>
        <authorList>
            <person name="Hernandez G."/>
            <person name="Miron M."/>
            <person name="Han H."/>
            <person name="Liu N."/>
            <person name="Magescas J."/>
            <person name="Tettweiler G."/>
            <person name="Frank F."/>
            <person name="Siddiqui N."/>
            <person name="Sonenberg N."/>
            <person name="Lasko P."/>
        </authorList>
    </citation>
    <scope>INTERACTION WITH MXT</scope>
</reference>
<comment type="function">
    <text evidence="1">Component of the eukaryotic translation initiation factor 3 (eIF-3) complex, which is involved in protein synthesis of a specialized repertoire of mRNAs and, together with other initiation factors, stimulates binding of mRNA and methionyl-tRNAi to the 40S ribosome. The eIF-3 complex specifically targets and initiates translation of a subset of mRNAs involved in cell proliferation.</text>
</comment>
<comment type="subunit">
    <text evidence="1 3">Component of the eukaryotic translation initiation factor 3 (eIF-3) complex. The eIF-3 complex interacts with pix. Interacts with mxt (PubMed:23716590).</text>
</comment>
<comment type="subcellular location">
    <subcellularLocation>
        <location evidence="1">Cytoplasm</location>
    </subcellularLocation>
</comment>
<comment type="similarity">
    <text evidence="1">Belongs to the eIF-3 subunit H family.</text>
</comment>
<feature type="chain" id="PRO_0000365188" description="Eukaryotic translation initiation factor 3 subunit H">
    <location>
        <begin position="1"/>
        <end position="338"/>
    </location>
</feature>
<feature type="domain" description="MPN" evidence="2">
    <location>
        <begin position="22"/>
        <end position="154"/>
    </location>
</feature>
<gene>
    <name evidence="1" type="primary">eIF3h</name>
    <name evidence="1" type="synonym">eIF-3p40</name>
    <name evidence="1" type="synonym">eif3-S3</name>
    <name type="ORF">Dmel_CG9124</name>
</gene>
<accession>Q9U9Q4</accession>
<accession>C0PTU9</accession>
<accession>Q7KLX2</accession>
<accession>Q9VMU9</accession>
<dbReference type="EMBL" id="AE014134">
    <property type="protein sequence ID" value="AAF52210.3"/>
    <property type="molecule type" value="Genomic_DNA"/>
</dbReference>
<dbReference type="EMBL" id="AE014134">
    <property type="protein sequence ID" value="AAS64639.1"/>
    <property type="molecule type" value="Genomic_DNA"/>
</dbReference>
<dbReference type="EMBL" id="AF160896">
    <property type="protein sequence ID" value="AAD46836.2"/>
    <property type="molecule type" value="mRNA"/>
</dbReference>
<dbReference type="EMBL" id="BT071794">
    <property type="protein sequence ID" value="ACN43730.1"/>
    <property type="molecule type" value="mRNA"/>
</dbReference>
<dbReference type="RefSeq" id="NP_524834.2">
    <property type="nucleotide sequence ID" value="NM_080095.4"/>
</dbReference>
<dbReference type="RefSeq" id="NP_995631.1">
    <property type="nucleotide sequence ID" value="NM_205909.3"/>
</dbReference>
<dbReference type="SMR" id="Q9U9Q4"/>
<dbReference type="BioGRID" id="69808">
    <property type="interactions" value="28"/>
</dbReference>
<dbReference type="FunCoup" id="Q9U9Q4">
    <property type="interactions" value="2328"/>
</dbReference>
<dbReference type="IntAct" id="Q9U9Q4">
    <property type="interactions" value="15"/>
</dbReference>
<dbReference type="STRING" id="7227.FBpp0078667"/>
<dbReference type="MEROPS" id="M67.971"/>
<dbReference type="PaxDb" id="7227-FBpp0078667"/>
<dbReference type="DNASU" id="45682"/>
<dbReference type="EnsemblMetazoa" id="FBtr0079030">
    <property type="protein sequence ID" value="FBpp0078667"/>
    <property type="gene ID" value="FBgn0022023"/>
</dbReference>
<dbReference type="EnsemblMetazoa" id="FBtr0079031">
    <property type="protein sequence ID" value="FBpp0089133"/>
    <property type="gene ID" value="FBgn0022023"/>
</dbReference>
<dbReference type="GeneID" id="45682"/>
<dbReference type="KEGG" id="dme:Dmel_CG9124"/>
<dbReference type="UCSC" id="CG9124-RA">
    <property type="organism name" value="d. melanogaster"/>
</dbReference>
<dbReference type="AGR" id="FB:FBgn0022023"/>
<dbReference type="CTD" id="8667"/>
<dbReference type="FlyBase" id="FBgn0022023">
    <property type="gene designation" value="eIF3h"/>
</dbReference>
<dbReference type="VEuPathDB" id="VectorBase:FBgn0022023"/>
<dbReference type="eggNOG" id="KOG1560">
    <property type="taxonomic scope" value="Eukaryota"/>
</dbReference>
<dbReference type="GeneTree" id="ENSGT00730000111042"/>
<dbReference type="HOGENOM" id="CLU_044094_0_0_1"/>
<dbReference type="InParanoid" id="Q9U9Q4"/>
<dbReference type="OMA" id="WYQSTYF"/>
<dbReference type="OrthoDB" id="10265695at2759"/>
<dbReference type="PhylomeDB" id="Q9U9Q4"/>
<dbReference type="Reactome" id="R-DME-156827">
    <property type="pathway name" value="L13a-mediated translational silencing of Ceruloplasmin expression"/>
</dbReference>
<dbReference type="Reactome" id="R-DME-72649">
    <property type="pathway name" value="Translation initiation complex formation"/>
</dbReference>
<dbReference type="Reactome" id="R-DME-72689">
    <property type="pathway name" value="Formation of a pool of free 40S subunits"/>
</dbReference>
<dbReference type="Reactome" id="R-DME-72695">
    <property type="pathway name" value="Formation of the ternary complex, and subsequently, the 43S complex"/>
</dbReference>
<dbReference type="Reactome" id="R-DME-72702">
    <property type="pathway name" value="Ribosomal scanning and start codon recognition"/>
</dbReference>
<dbReference type="SignaLink" id="Q9U9Q4"/>
<dbReference type="BioGRID-ORCS" id="45682">
    <property type="hits" value="1 hit in 1 CRISPR screen"/>
</dbReference>
<dbReference type="ChiTaRS" id="eIF-3p40">
    <property type="organism name" value="fly"/>
</dbReference>
<dbReference type="GenomeRNAi" id="45682"/>
<dbReference type="PRO" id="PR:Q9U9Q4"/>
<dbReference type="Proteomes" id="UP000000803">
    <property type="component" value="Chromosome 2L"/>
</dbReference>
<dbReference type="Bgee" id="FBgn0022023">
    <property type="expression patterns" value="Expressed in wing disc and 227 other cell types or tissues"/>
</dbReference>
<dbReference type="GO" id="GO:0005829">
    <property type="term" value="C:cytosol"/>
    <property type="evidence" value="ECO:0000250"/>
    <property type="project" value="FlyBase"/>
</dbReference>
<dbReference type="GO" id="GO:0016282">
    <property type="term" value="C:eukaryotic 43S preinitiation complex"/>
    <property type="evidence" value="ECO:0000318"/>
    <property type="project" value="GO_Central"/>
</dbReference>
<dbReference type="GO" id="GO:0033290">
    <property type="term" value="C:eukaryotic 48S preinitiation complex"/>
    <property type="evidence" value="ECO:0007669"/>
    <property type="project" value="UniProtKB-UniRule"/>
</dbReference>
<dbReference type="GO" id="GO:0005852">
    <property type="term" value="C:eukaryotic translation initiation factor 3 complex"/>
    <property type="evidence" value="ECO:0000250"/>
    <property type="project" value="FlyBase"/>
</dbReference>
<dbReference type="GO" id="GO:0140492">
    <property type="term" value="F:metal-dependent deubiquitinase activity"/>
    <property type="evidence" value="ECO:0000250"/>
    <property type="project" value="FlyBase"/>
</dbReference>
<dbReference type="GO" id="GO:0008237">
    <property type="term" value="F:metallopeptidase activity"/>
    <property type="evidence" value="ECO:0000318"/>
    <property type="project" value="GO_Central"/>
</dbReference>
<dbReference type="GO" id="GO:0003743">
    <property type="term" value="F:translation initiation factor activity"/>
    <property type="evidence" value="ECO:0000250"/>
    <property type="project" value="FlyBase"/>
</dbReference>
<dbReference type="GO" id="GO:0001732">
    <property type="term" value="P:formation of cytoplasmic translation initiation complex"/>
    <property type="evidence" value="ECO:0007669"/>
    <property type="project" value="UniProtKB-UniRule"/>
</dbReference>
<dbReference type="GO" id="GO:0032435">
    <property type="term" value="P:negative regulation of proteasomal ubiquitin-dependent protein catabolic process"/>
    <property type="evidence" value="ECO:0000250"/>
    <property type="project" value="FlyBase"/>
</dbReference>
<dbReference type="GO" id="GO:0045747">
    <property type="term" value="P:positive regulation of Notch signaling pathway"/>
    <property type="evidence" value="ECO:0000315"/>
    <property type="project" value="FlyBase"/>
</dbReference>
<dbReference type="GO" id="GO:0006413">
    <property type="term" value="P:translational initiation"/>
    <property type="evidence" value="ECO:0000250"/>
    <property type="project" value="FlyBase"/>
</dbReference>
<dbReference type="CDD" id="cd08065">
    <property type="entry name" value="MPN_eIF3h"/>
    <property type="match status" value="1"/>
</dbReference>
<dbReference type="FunFam" id="3.40.140.10:FF:000045">
    <property type="entry name" value="Eukaryotic translation initiation factor 3 subunit H"/>
    <property type="match status" value="1"/>
</dbReference>
<dbReference type="Gene3D" id="3.40.140.10">
    <property type="entry name" value="Cytidine Deaminase, domain 2"/>
    <property type="match status" value="1"/>
</dbReference>
<dbReference type="HAMAP" id="MF_03007">
    <property type="entry name" value="eIF3h"/>
    <property type="match status" value="1"/>
</dbReference>
<dbReference type="InterPro" id="IPR027524">
    <property type="entry name" value="eIF3h"/>
</dbReference>
<dbReference type="InterPro" id="IPR045810">
    <property type="entry name" value="eIF3h_C"/>
</dbReference>
<dbReference type="InterPro" id="IPR000555">
    <property type="entry name" value="JAMM/MPN+_dom"/>
</dbReference>
<dbReference type="InterPro" id="IPR050242">
    <property type="entry name" value="JAMM_MPN+_peptidase_M67A"/>
</dbReference>
<dbReference type="InterPro" id="IPR037518">
    <property type="entry name" value="MPN"/>
</dbReference>
<dbReference type="PANTHER" id="PTHR10410">
    <property type="entry name" value="EUKARYOTIC TRANSLATION INITIATION FACTOR 3 -RELATED"/>
    <property type="match status" value="1"/>
</dbReference>
<dbReference type="Pfam" id="PF19445">
    <property type="entry name" value="eIF3h_C"/>
    <property type="match status" value="1"/>
</dbReference>
<dbReference type="Pfam" id="PF01398">
    <property type="entry name" value="JAB"/>
    <property type="match status" value="1"/>
</dbReference>
<dbReference type="SMART" id="SM00232">
    <property type="entry name" value="JAB_MPN"/>
    <property type="match status" value="1"/>
</dbReference>
<dbReference type="PROSITE" id="PS50249">
    <property type="entry name" value="MPN"/>
    <property type="match status" value="1"/>
</dbReference>
<organism>
    <name type="scientific">Drosophila melanogaster</name>
    <name type="common">Fruit fly</name>
    <dbReference type="NCBI Taxonomy" id="7227"/>
    <lineage>
        <taxon>Eukaryota</taxon>
        <taxon>Metazoa</taxon>
        <taxon>Ecdysozoa</taxon>
        <taxon>Arthropoda</taxon>
        <taxon>Hexapoda</taxon>
        <taxon>Insecta</taxon>
        <taxon>Pterygota</taxon>
        <taxon>Neoptera</taxon>
        <taxon>Endopterygota</taxon>
        <taxon>Diptera</taxon>
        <taxon>Brachycera</taxon>
        <taxon>Muscomorpha</taxon>
        <taxon>Ephydroidea</taxon>
        <taxon>Drosophilidae</taxon>
        <taxon>Drosophila</taxon>
        <taxon>Sophophora</taxon>
    </lineage>
</organism>